<sequence length="151" mass="16346">MKKIDVKILDPRIGTEFPLPTYATIGSAGLDLRALVDEGFEVQPGETKLISTGLSIYIADPNLAAVILPRSGLGHKNGIVLGNLVGLIDSDYQGPLMVSLWNRSDKPFKIEIGDRIAQLVFVPVVQAEFNIVEEFQQTDRGNGGFGHSGKK</sequence>
<comment type="function">
    <text evidence="1">This enzyme is involved in nucleotide metabolism: it produces dUMP, the immediate precursor of thymidine nucleotides and it decreases the intracellular concentration of dUTP so that uracil cannot be incorporated into DNA.</text>
</comment>
<comment type="catalytic activity">
    <reaction evidence="1">
        <text>dUTP + H2O = dUMP + diphosphate + H(+)</text>
        <dbReference type="Rhea" id="RHEA:10248"/>
        <dbReference type="ChEBI" id="CHEBI:15377"/>
        <dbReference type="ChEBI" id="CHEBI:15378"/>
        <dbReference type="ChEBI" id="CHEBI:33019"/>
        <dbReference type="ChEBI" id="CHEBI:61555"/>
        <dbReference type="ChEBI" id="CHEBI:246422"/>
        <dbReference type="EC" id="3.6.1.23"/>
    </reaction>
</comment>
<comment type="cofactor">
    <cofactor evidence="1">
        <name>Mg(2+)</name>
        <dbReference type="ChEBI" id="CHEBI:18420"/>
    </cofactor>
</comment>
<comment type="pathway">
    <text evidence="1">Pyrimidine metabolism; dUMP biosynthesis; dUMP from dCTP (dUTP route): step 2/2.</text>
</comment>
<comment type="similarity">
    <text evidence="1">Belongs to the dUTPase family.</text>
</comment>
<dbReference type="EC" id="3.6.1.23" evidence="1"/>
<dbReference type="EMBL" id="CP000947">
    <property type="protein sequence ID" value="ACA32362.1"/>
    <property type="molecule type" value="Genomic_DNA"/>
</dbReference>
<dbReference type="RefSeq" id="WP_011608294.1">
    <property type="nucleotide sequence ID" value="NC_010519.1"/>
</dbReference>
<dbReference type="SMR" id="B0UUW5"/>
<dbReference type="STRING" id="228400.HSM_0007"/>
<dbReference type="GeneID" id="31486282"/>
<dbReference type="KEGG" id="hsm:HSM_0007"/>
<dbReference type="HOGENOM" id="CLU_068508_1_1_6"/>
<dbReference type="UniPathway" id="UPA00610">
    <property type="reaction ID" value="UER00666"/>
</dbReference>
<dbReference type="GO" id="GO:0004170">
    <property type="term" value="F:dUTP diphosphatase activity"/>
    <property type="evidence" value="ECO:0007669"/>
    <property type="project" value="UniProtKB-UniRule"/>
</dbReference>
<dbReference type="GO" id="GO:0000287">
    <property type="term" value="F:magnesium ion binding"/>
    <property type="evidence" value="ECO:0007669"/>
    <property type="project" value="UniProtKB-UniRule"/>
</dbReference>
<dbReference type="GO" id="GO:0006226">
    <property type="term" value="P:dUMP biosynthetic process"/>
    <property type="evidence" value="ECO:0007669"/>
    <property type="project" value="UniProtKB-UniRule"/>
</dbReference>
<dbReference type="GO" id="GO:0046081">
    <property type="term" value="P:dUTP catabolic process"/>
    <property type="evidence" value="ECO:0007669"/>
    <property type="project" value="InterPro"/>
</dbReference>
<dbReference type="CDD" id="cd07557">
    <property type="entry name" value="trimeric_dUTPase"/>
    <property type="match status" value="1"/>
</dbReference>
<dbReference type="FunFam" id="2.70.40.10:FF:000002">
    <property type="entry name" value="dUTP diphosphatase"/>
    <property type="match status" value="1"/>
</dbReference>
<dbReference type="Gene3D" id="2.70.40.10">
    <property type="match status" value="1"/>
</dbReference>
<dbReference type="HAMAP" id="MF_00116">
    <property type="entry name" value="dUTPase_bact"/>
    <property type="match status" value="1"/>
</dbReference>
<dbReference type="InterPro" id="IPR008181">
    <property type="entry name" value="dUTPase"/>
</dbReference>
<dbReference type="InterPro" id="IPR029054">
    <property type="entry name" value="dUTPase-like"/>
</dbReference>
<dbReference type="InterPro" id="IPR036157">
    <property type="entry name" value="dUTPase-like_sf"/>
</dbReference>
<dbReference type="InterPro" id="IPR033704">
    <property type="entry name" value="dUTPase_trimeric"/>
</dbReference>
<dbReference type="NCBIfam" id="TIGR00576">
    <property type="entry name" value="dut"/>
    <property type="match status" value="1"/>
</dbReference>
<dbReference type="NCBIfam" id="NF001862">
    <property type="entry name" value="PRK00601.1"/>
    <property type="match status" value="1"/>
</dbReference>
<dbReference type="PANTHER" id="PTHR11241">
    <property type="entry name" value="DEOXYURIDINE 5'-TRIPHOSPHATE NUCLEOTIDOHYDROLASE"/>
    <property type="match status" value="1"/>
</dbReference>
<dbReference type="PANTHER" id="PTHR11241:SF0">
    <property type="entry name" value="DEOXYURIDINE 5'-TRIPHOSPHATE NUCLEOTIDOHYDROLASE"/>
    <property type="match status" value="1"/>
</dbReference>
<dbReference type="Pfam" id="PF00692">
    <property type="entry name" value="dUTPase"/>
    <property type="match status" value="1"/>
</dbReference>
<dbReference type="SUPFAM" id="SSF51283">
    <property type="entry name" value="dUTPase-like"/>
    <property type="match status" value="1"/>
</dbReference>
<keyword id="KW-0378">Hydrolase</keyword>
<keyword id="KW-0460">Magnesium</keyword>
<keyword id="KW-0479">Metal-binding</keyword>
<keyword id="KW-0546">Nucleotide metabolism</keyword>
<name>DUT_HISS2</name>
<gene>
    <name evidence="1" type="primary">dut</name>
    <name type="ordered locus">HSM_0007</name>
</gene>
<evidence type="ECO:0000255" key="1">
    <source>
        <dbReference type="HAMAP-Rule" id="MF_00116"/>
    </source>
</evidence>
<organism>
    <name type="scientific">Histophilus somni (strain 2336)</name>
    <name type="common">Haemophilus somnus</name>
    <dbReference type="NCBI Taxonomy" id="228400"/>
    <lineage>
        <taxon>Bacteria</taxon>
        <taxon>Pseudomonadati</taxon>
        <taxon>Pseudomonadota</taxon>
        <taxon>Gammaproteobacteria</taxon>
        <taxon>Pasteurellales</taxon>
        <taxon>Pasteurellaceae</taxon>
        <taxon>Histophilus</taxon>
    </lineage>
</organism>
<accession>B0UUW5</accession>
<proteinExistence type="inferred from homology"/>
<feature type="chain" id="PRO_1000076060" description="Deoxyuridine 5'-triphosphate nucleotidohydrolase">
    <location>
        <begin position="1"/>
        <end position="151"/>
    </location>
</feature>
<feature type="binding site" evidence="1">
    <location>
        <begin position="70"/>
        <end position="72"/>
    </location>
    <ligand>
        <name>substrate</name>
    </ligand>
</feature>
<feature type="binding site" evidence="1">
    <location>
        <position position="83"/>
    </location>
    <ligand>
        <name>substrate</name>
    </ligand>
</feature>
<feature type="binding site" evidence="1">
    <location>
        <begin position="87"/>
        <end position="89"/>
    </location>
    <ligand>
        <name>substrate</name>
    </ligand>
</feature>
<feature type="binding site" evidence="1">
    <location>
        <position position="97"/>
    </location>
    <ligand>
        <name>substrate</name>
    </ligand>
</feature>
<protein>
    <recommendedName>
        <fullName evidence="1">Deoxyuridine 5'-triphosphate nucleotidohydrolase</fullName>
        <shortName evidence="1">dUTPase</shortName>
        <ecNumber evidence="1">3.6.1.23</ecNumber>
    </recommendedName>
    <alternativeName>
        <fullName evidence="1">dUTP pyrophosphatase</fullName>
    </alternativeName>
</protein>
<reference key="1">
    <citation type="submission" date="2008-02" db="EMBL/GenBank/DDBJ databases">
        <title>Complete sequence of Haemophilus somnus 2336.</title>
        <authorList>
            <consortium name="US DOE Joint Genome Institute"/>
            <person name="Siddaramappa S."/>
            <person name="Duncan A.J."/>
            <person name="Challacombe J.F."/>
            <person name="Rainey D."/>
            <person name="Gillaspy A.F."/>
            <person name="Carson M."/>
            <person name="Gipson J."/>
            <person name="Gipson M."/>
            <person name="Bruce D."/>
            <person name="Detter J.C."/>
            <person name="Han C.S."/>
            <person name="Land M."/>
            <person name="Tapia R."/>
            <person name="Thompson L.S."/>
            <person name="Orvis J."/>
            <person name="Zaitshik J."/>
            <person name="Barnes G."/>
            <person name="Brettin T.S."/>
            <person name="Dyer D.W."/>
            <person name="Inzana T.J."/>
        </authorList>
    </citation>
    <scope>NUCLEOTIDE SEQUENCE [LARGE SCALE GENOMIC DNA]</scope>
    <source>
        <strain>2336</strain>
    </source>
</reference>